<sequence>MAKIITFDDIDIEFKKLYEELSKQESYTTGVVYEVFNIFTLKSYIGKAHSYVKNGNQPVRRQGAKGRFYKHWKSCHNGENDCPIFYEALRNSDPQEWAVIILKVCSLKHLKEWETKMIERLDTSNPDKGYNYFVGDNKPNNPEYLVKYQSAKATSNAERAVSGALKKKAHNKDLPANINYRKKINKNGSIGEGYFVQIKIDGHLYNKAFLSGTMSMEAKLEAAKKTLEKFKQEAASKRAKRTKPSGSKTTRSTGRK</sequence>
<organismHost>
    <name type="scientific">Acanthamoeba polyphaga</name>
    <name type="common">Amoeba</name>
    <dbReference type="NCBI Taxonomy" id="5757"/>
</organismHost>
<dbReference type="EMBL" id="AY653733">
    <property type="protein sequence ID" value="AAV50766.1"/>
    <property type="molecule type" value="Genomic_DNA"/>
</dbReference>
<dbReference type="KEGG" id="vg:9925133"/>
<dbReference type="OrthoDB" id="17278at10239"/>
<dbReference type="Proteomes" id="UP000001134">
    <property type="component" value="Genome"/>
</dbReference>
<dbReference type="Gene3D" id="3.40.1440.10">
    <property type="entry name" value="GIY-YIG endonuclease"/>
    <property type="match status" value="1"/>
</dbReference>
<dbReference type="InterPro" id="IPR035901">
    <property type="entry name" value="GIY-YIG_endonuc_sf"/>
</dbReference>
<evidence type="ECO:0000255" key="1"/>
<evidence type="ECO:0000256" key="2">
    <source>
        <dbReference type="SAM" id="MobiDB-lite"/>
    </source>
</evidence>
<accession>Q5UP45</accession>
<name>YR502_MIMIV</name>
<keyword id="KW-0175">Coiled coil</keyword>
<keyword id="KW-1185">Reference proteome</keyword>
<gene>
    <name type="ordered locus">MIMI_R502</name>
</gene>
<reference key="1">
    <citation type="journal article" date="2004" name="Science">
        <title>The 1.2-megabase genome sequence of Mimivirus.</title>
        <authorList>
            <person name="Raoult D."/>
            <person name="Audic S."/>
            <person name="Robert C."/>
            <person name="Abergel C."/>
            <person name="Renesto P."/>
            <person name="Ogata H."/>
            <person name="La Scola B."/>
            <person name="Susan M."/>
            <person name="Claverie J.-M."/>
        </authorList>
    </citation>
    <scope>NUCLEOTIDE SEQUENCE [LARGE SCALE GENOMIC DNA]</scope>
    <source>
        <strain>Rowbotham-Bradford</strain>
    </source>
</reference>
<proteinExistence type="predicted"/>
<protein>
    <recommendedName>
        <fullName>Uncharacterized protein R502</fullName>
    </recommendedName>
</protein>
<organism>
    <name type="scientific">Acanthamoeba polyphaga mimivirus</name>
    <name type="common">APMV</name>
    <dbReference type="NCBI Taxonomy" id="212035"/>
    <lineage>
        <taxon>Viruses</taxon>
        <taxon>Varidnaviria</taxon>
        <taxon>Bamfordvirae</taxon>
        <taxon>Nucleocytoviricota</taxon>
        <taxon>Megaviricetes</taxon>
        <taxon>Imitervirales</taxon>
        <taxon>Mimiviridae</taxon>
        <taxon>Megamimivirinae</taxon>
        <taxon>Mimivirus</taxon>
        <taxon>Mimivirus bradfordmassiliense</taxon>
    </lineage>
</organism>
<feature type="chain" id="PRO_0000244019" description="Uncharacterized protein R502">
    <location>
        <begin position="1"/>
        <end position="256"/>
    </location>
</feature>
<feature type="region of interest" description="Disordered" evidence="2">
    <location>
        <begin position="231"/>
        <end position="256"/>
    </location>
</feature>
<feature type="coiled-coil region" evidence="1">
    <location>
        <begin position="213"/>
        <end position="243"/>
    </location>
</feature>
<feature type="compositionally biased region" description="Polar residues" evidence="2">
    <location>
        <begin position="244"/>
        <end position="256"/>
    </location>
</feature>